<dbReference type="EMBL" id="X16495">
    <property type="protein sequence ID" value="CAA34511.1"/>
    <property type="molecule type" value="Genomic_DNA"/>
</dbReference>
<dbReference type="EMBL" id="Z80776">
    <property type="protein sequence ID" value="CAB02538.1"/>
    <property type="molecule type" value="Genomic_DNA"/>
</dbReference>
<dbReference type="EMBL" id="AY131985">
    <property type="protein sequence ID" value="AAN59966.1"/>
    <property type="molecule type" value="Genomic_DNA"/>
</dbReference>
<dbReference type="EMBL" id="CR541970">
    <property type="protein sequence ID" value="CAG46768.1"/>
    <property type="molecule type" value="mRNA"/>
</dbReference>
<dbReference type="EMBL" id="CR541999">
    <property type="protein sequence ID" value="CAG46796.1"/>
    <property type="molecule type" value="mRNA"/>
</dbReference>
<dbReference type="EMBL" id="AL031777">
    <property type="status" value="NOT_ANNOTATED_CDS"/>
    <property type="molecule type" value="Genomic_DNA"/>
</dbReference>
<dbReference type="EMBL" id="BC093807">
    <property type="protein sequence ID" value="AAH93807.1"/>
    <property type="molecule type" value="mRNA"/>
</dbReference>
<dbReference type="EMBL" id="BC093809">
    <property type="protein sequence ID" value="AAH93809.1"/>
    <property type="molecule type" value="mRNA"/>
</dbReference>
<dbReference type="EMBL" id="BC128035">
    <property type="protein sequence ID" value="AAI28036.1"/>
    <property type="molecule type" value="mRNA"/>
</dbReference>
<dbReference type="CCDS" id="CCDS4591.1"/>
<dbReference type="PIR" id="S06754">
    <property type="entry name" value="S06754"/>
</dbReference>
<dbReference type="RefSeq" id="NP_066409.1">
    <property type="nucleotide sequence ID" value="NM_021065.3"/>
</dbReference>
<dbReference type="PDB" id="5GT3">
    <property type="method" value="X-ray"/>
    <property type="resolution" value="2.91 A"/>
    <property type="chains" value="C/G=2-130"/>
</dbReference>
<dbReference type="PDB" id="6KBB">
    <property type="method" value="X-ray"/>
    <property type="resolution" value="2.37 A"/>
    <property type="chains" value="A/C=14-107"/>
</dbReference>
<dbReference type="PDB" id="7EA8">
    <property type="method" value="EM"/>
    <property type="resolution" value="3.10 A"/>
    <property type="chains" value="C/G=15-118"/>
</dbReference>
<dbReference type="PDB" id="7WLP">
    <property type="method" value="X-ray"/>
    <property type="resolution" value="2.29 A"/>
    <property type="chains" value="A=14-112"/>
</dbReference>
<dbReference type="PDB" id="8H1T">
    <property type="method" value="EM"/>
    <property type="resolution" value="3.00 A"/>
    <property type="chains" value="C/G=1-130"/>
</dbReference>
<dbReference type="PDB" id="8YJF">
    <property type="method" value="X-ray"/>
    <property type="resolution" value="4.40 A"/>
    <property type="chains" value="H=2-130"/>
</dbReference>
<dbReference type="PDB" id="8YJM">
    <property type="method" value="X-ray"/>
    <property type="resolution" value="4.15 A"/>
    <property type="chains" value="G=14-112"/>
</dbReference>
<dbReference type="PDBsum" id="5GT3"/>
<dbReference type="PDBsum" id="6KBB"/>
<dbReference type="PDBsum" id="7EA8"/>
<dbReference type="PDBsum" id="7WLP"/>
<dbReference type="PDBsum" id="8H1T"/>
<dbReference type="PDBsum" id="8YJF"/>
<dbReference type="PDBsum" id="8YJM"/>
<dbReference type="EMDB" id="EMD-31040"/>
<dbReference type="EMDB" id="EMD-34431"/>
<dbReference type="SMR" id="P20671"/>
<dbReference type="BioGRID" id="109267">
    <property type="interactions" value="110"/>
</dbReference>
<dbReference type="FunCoup" id="P20671">
    <property type="interactions" value="958"/>
</dbReference>
<dbReference type="IntAct" id="P20671">
    <property type="interactions" value="41"/>
</dbReference>
<dbReference type="MINT" id="P20671"/>
<dbReference type="STRING" id="9606.ENSP00000341094"/>
<dbReference type="GlyGen" id="P20671">
    <property type="glycosylation" value="1 site, 1 O-linked glycan (1 site)"/>
</dbReference>
<dbReference type="iPTMnet" id="P20671"/>
<dbReference type="PhosphoSitePlus" id="P20671"/>
<dbReference type="SwissPalm" id="P20671"/>
<dbReference type="BioMuta" id="HIST1H2AD"/>
<dbReference type="DMDM" id="121978"/>
<dbReference type="jPOST" id="P20671"/>
<dbReference type="MassIVE" id="P20671"/>
<dbReference type="PaxDb" id="9606-ENSP00000341094"/>
<dbReference type="PeptideAtlas" id="P20671"/>
<dbReference type="PRIDE" id="P20671"/>
<dbReference type="Pumba" id="P20671"/>
<dbReference type="TopDownProteomics" id="P20671"/>
<dbReference type="Antibodypedia" id="53625">
    <property type="antibodies" value="19 antibodies from 4 providers"/>
</dbReference>
<dbReference type="DNASU" id="3013"/>
<dbReference type="Ensembl" id="ENST00000341023.2">
    <property type="protein sequence ID" value="ENSP00000341094.2"/>
    <property type="gene ID" value="ENSG00000196866.3"/>
</dbReference>
<dbReference type="GeneID" id="3013"/>
<dbReference type="KEGG" id="hsa:3013"/>
<dbReference type="MANE-Select" id="ENST00000341023.2">
    <property type="protein sequence ID" value="ENSP00000341094.2"/>
    <property type="RefSeq nucleotide sequence ID" value="NM_021065.3"/>
    <property type="RefSeq protein sequence ID" value="NP_066409.1"/>
</dbReference>
<dbReference type="UCSC" id="uc003ngw.5">
    <property type="organism name" value="human"/>
</dbReference>
<dbReference type="AGR" id="HGNC:4729"/>
<dbReference type="CTD" id="3013"/>
<dbReference type="DisGeNET" id="3013"/>
<dbReference type="GeneCards" id="H2AC7"/>
<dbReference type="HGNC" id="HGNC:4729">
    <property type="gene designation" value="H2AC7"/>
</dbReference>
<dbReference type="HPA" id="ENSG00000196866">
    <property type="expression patterns" value="Low tissue specificity"/>
</dbReference>
<dbReference type="MIM" id="602792">
    <property type="type" value="gene"/>
</dbReference>
<dbReference type="neXtProt" id="NX_P20671"/>
<dbReference type="OpenTargets" id="ENSG00000196866"/>
<dbReference type="VEuPathDB" id="HostDB:ENSG00000196866"/>
<dbReference type="eggNOG" id="KOG1756">
    <property type="taxonomic scope" value="Eukaryota"/>
</dbReference>
<dbReference type="GeneTree" id="ENSGT00940000160426"/>
<dbReference type="HOGENOM" id="CLU_062828_3_1_1"/>
<dbReference type="InParanoid" id="P20671"/>
<dbReference type="OMA" id="WCPKIAR"/>
<dbReference type="OrthoDB" id="9829024at2759"/>
<dbReference type="PAN-GO" id="P20671">
    <property type="GO annotations" value="1 GO annotation based on evolutionary models"/>
</dbReference>
<dbReference type="PhylomeDB" id="P20671"/>
<dbReference type="TreeFam" id="TF300137"/>
<dbReference type="PathwayCommons" id="P20671"/>
<dbReference type="Reactome" id="R-HSA-110328">
    <property type="pathway name" value="Recognition and association of DNA glycosylase with site containing an affected pyrimidine"/>
</dbReference>
<dbReference type="Reactome" id="R-HSA-110329">
    <property type="pathway name" value="Cleavage of the damaged pyrimidine"/>
</dbReference>
<dbReference type="Reactome" id="R-HSA-110330">
    <property type="pathway name" value="Recognition and association of DNA glycosylase with site containing an affected purine"/>
</dbReference>
<dbReference type="Reactome" id="R-HSA-110331">
    <property type="pathway name" value="Cleavage of the damaged purine"/>
</dbReference>
<dbReference type="Reactome" id="R-HSA-1221632">
    <property type="pathway name" value="Meiotic synapsis"/>
</dbReference>
<dbReference type="Reactome" id="R-HSA-171306">
    <property type="pathway name" value="Packaging Of Telomere Ends"/>
</dbReference>
<dbReference type="Reactome" id="R-HSA-1912408">
    <property type="pathway name" value="Pre-NOTCH Transcription and Translation"/>
</dbReference>
<dbReference type="Reactome" id="R-HSA-201722">
    <property type="pathway name" value="Formation of the beta-catenin:TCF transactivating complex"/>
</dbReference>
<dbReference type="Reactome" id="R-HSA-212300">
    <property type="pathway name" value="PRC2 methylates histones and DNA"/>
</dbReference>
<dbReference type="Reactome" id="R-HSA-2299718">
    <property type="pathway name" value="Condensation of Prophase Chromosomes"/>
</dbReference>
<dbReference type="Reactome" id="R-HSA-2559580">
    <property type="pathway name" value="Oxidative Stress Induced Senescence"/>
</dbReference>
<dbReference type="Reactome" id="R-HSA-2559582">
    <property type="pathway name" value="Senescence-Associated Secretory Phenotype (SASP)"/>
</dbReference>
<dbReference type="Reactome" id="R-HSA-2559586">
    <property type="pathway name" value="DNA Damage/Telomere Stress Induced Senescence"/>
</dbReference>
<dbReference type="Reactome" id="R-HSA-3214815">
    <property type="pathway name" value="HDACs deacetylate histones"/>
</dbReference>
<dbReference type="Reactome" id="R-HSA-3214847">
    <property type="pathway name" value="HATs acetylate histones"/>
</dbReference>
<dbReference type="Reactome" id="R-HSA-3214858">
    <property type="pathway name" value="RMTs methylate histone arginines"/>
</dbReference>
<dbReference type="Reactome" id="R-HSA-427359">
    <property type="pathway name" value="SIRT1 negatively regulates rRNA expression"/>
</dbReference>
<dbReference type="Reactome" id="R-HSA-427389">
    <property type="pathway name" value="ERCC6 (CSB) and EHMT2 (G9a) positively regulate rRNA expression"/>
</dbReference>
<dbReference type="Reactome" id="R-HSA-427413">
    <property type="pathway name" value="NoRC negatively regulates rRNA expression"/>
</dbReference>
<dbReference type="Reactome" id="R-HSA-5250924">
    <property type="pathway name" value="B-WICH complex positively regulates rRNA expression"/>
</dbReference>
<dbReference type="Reactome" id="R-HSA-5334118">
    <property type="pathway name" value="DNA methylation"/>
</dbReference>
<dbReference type="Reactome" id="R-HSA-5578749">
    <property type="pathway name" value="Transcriptional regulation by small RNAs"/>
</dbReference>
<dbReference type="Reactome" id="R-HSA-5617472">
    <property type="pathway name" value="Activation of anterior HOX genes in hindbrain development during early embryogenesis"/>
</dbReference>
<dbReference type="Reactome" id="R-HSA-5625886">
    <property type="pathway name" value="Activated PKN1 stimulates transcription of AR (androgen receptor) regulated genes KLK2 and KLK3"/>
</dbReference>
<dbReference type="Reactome" id="R-HSA-5689603">
    <property type="pathway name" value="UCH proteinases"/>
</dbReference>
<dbReference type="Reactome" id="R-HSA-5689880">
    <property type="pathway name" value="Ub-specific processing proteases"/>
</dbReference>
<dbReference type="Reactome" id="R-HSA-5689901">
    <property type="pathway name" value="Metalloprotease DUBs"/>
</dbReference>
<dbReference type="Reactome" id="R-HSA-606279">
    <property type="pathway name" value="Deposition of new CENPA-containing nucleosomes at the centromere"/>
</dbReference>
<dbReference type="Reactome" id="R-HSA-68616">
    <property type="pathway name" value="Assembly of the ORC complex at the origin of replication"/>
</dbReference>
<dbReference type="Reactome" id="R-HSA-73728">
    <property type="pathway name" value="RNA Polymerase I Promoter Opening"/>
</dbReference>
<dbReference type="Reactome" id="R-HSA-73772">
    <property type="pathway name" value="RNA Polymerase I Promoter Escape"/>
</dbReference>
<dbReference type="Reactome" id="R-HSA-8936459">
    <property type="pathway name" value="RUNX1 regulates genes involved in megakaryocyte differentiation and platelet function"/>
</dbReference>
<dbReference type="Reactome" id="R-HSA-8939236">
    <property type="pathway name" value="RUNX1 regulates transcription of genes involved in differentiation of HSCs"/>
</dbReference>
<dbReference type="Reactome" id="R-HSA-9018519">
    <property type="pathway name" value="Estrogen-dependent gene expression"/>
</dbReference>
<dbReference type="Reactome" id="R-HSA-912446">
    <property type="pathway name" value="Meiotic recombination"/>
</dbReference>
<dbReference type="Reactome" id="R-HSA-9609690">
    <property type="pathway name" value="HCMV Early Events"/>
</dbReference>
<dbReference type="Reactome" id="R-HSA-9610379">
    <property type="pathway name" value="HCMV Late Events"/>
</dbReference>
<dbReference type="Reactome" id="R-HSA-9616222">
    <property type="pathway name" value="Transcriptional regulation of granulopoiesis"/>
</dbReference>
<dbReference type="Reactome" id="R-HSA-9670095">
    <property type="pathway name" value="Inhibition of DNA recombination at telomere"/>
</dbReference>
<dbReference type="Reactome" id="R-HSA-9710421">
    <property type="pathway name" value="Defective pyroptosis"/>
</dbReference>
<dbReference type="Reactome" id="R-HSA-977225">
    <property type="pathway name" value="Amyloid fiber formation"/>
</dbReference>
<dbReference type="Reactome" id="R-HSA-9821002">
    <property type="pathway name" value="Chromatin modifications during the maternal to zygotic transition (MZT)"/>
</dbReference>
<dbReference type="Reactome" id="R-HSA-9841922">
    <property type="pathway name" value="MLL4 and MLL3 complexes regulate expression of PPARG target genes in adipogenesis and hepatic steatosis"/>
</dbReference>
<dbReference type="Reactome" id="R-HSA-9843940">
    <property type="pathway name" value="Regulation of endogenous retroelements by KRAB-ZFP proteins"/>
</dbReference>
<dbReference type="Reactome" id="R-HSA-9843970">
    <property type="pathway name" value="Regulation of endogenous retroelements by the Human Silencing Hub (HUSH) complex"/>
</dbReference>
<dbReference type="Reactome" id="R-HSA-9845323">
    <property type="pathway name" value="Regulation of endogenous retroelements by Piwi-interacting RNAs (piRNAs)"/>
</dbReference>
<dbReference type="SignaLink" id="P20671"/>
<dbReference type="SIGNOR" id="P20671"/>
<dbReference type="BioGRID-ORCS" id="3013">
    <property type="hits" value="125 hits in 1128 CRISPR screens"/>
</dbReference>
<dbReference type="CD-CODE" id="91857CE7">
    <property type="entry name" value="Nucleolus"/>
</dbReference>
<dbReference type="GeneWiki" id="HIST1H2AD"/>
<dbReference type="GenomeRNAi" id="3013"/>
<dbReference type="Pharos" id="P20671">
    <property type="development level" value="Tdark"/>
</dbReference>
<dbReference type="PRO" id="PR:P20671"/>
<dbReference type="Proteomes" id="UP000005640">
    <property type="component" value="Chromosome 6"/>
</dbReference>
<dbReference type="RNAct" id="P20671">
    <property type="molecule type" value="protein"/>
</dbReference>
<dbReference type="Bgee" id="ENSG00000196866">
    <property type="expression patterns" value="Expressed in bone marrow cell and 95 other cell types or tissues"/>
</dbReference>
<dbReference type="GO" id="GO:0070062">
    <property type="term" value="C:extracellular exosome"/>
    <property type="evidence" value="ECO:0007005"/>
    <property type="project" value="UniProtKB"/>
</dbReference>
<dbReference type="GO" id="GO:0000786">
    <property type="term" value="C:nucleosome"/>
    <property type="evidence" value="ECO:0000318"/>
    <property type="project" value="GO_Central"/>
</dbReference>
<dbReference type="GO" id="GO:0005634">
    <property type="term" value="C:nucleus"/>
    <property type="evidence" value="ECO:0000314"/>
    <property type="project" value="UniProtKB"/>
</dbReference>
<dbReference type="GO" id="GO:0003677">
    <property type="term" value="F:DNA binding"/>
    <property type="evidence" value="ECO:0007669"/>
    <property type="project" value="UniProtKB-KW"/>
</dbReference>
<dbReference type="GO" id="GO:0046982">
    <property type="term" value="F:protein heterodimerization activity"/>
    <property type="evidence" value="ECO:0007669"/>
    <property type="project" value="InterPro"/>
</dbReference>
<dbReference type="GO" id="GO:0030527">
    <property type="term" value="F:structural constituent of chromatin"/>
    <property type="evidence" value="ECO:0000318"/>
    <property type="project" value="GO_Central"/>
</dbReference>
<dbReference type="GO" id="GO:0031507">
    <property type="term" value="P:heterochromatin formation"/>
    <property type="evidence" value="ECO:0000318"/>
    <property type="project" value="GO_Central"/>
</dbReference>
<dbReference type="CDD" id="cd00074">
    <property type="entry name" value="HFD_H2A"/>
    <property type="match status" value="1"/>
</dbReference>
<dbReference type="FunFam" id="1.10.20.10:FF:000103">
    <property type="entry name" value="Histone H2A type 1"/>
    <property type="match status" value="1"/>
</dbReference>
<dbReference type="Gene3D" id="1.10.20.10">
    <property type="entry name" value="Histone, subunit A"/>
    <property type="match status" value="1"/>
</dbReference>
<dbReference type="InterPro" id="IPR009072">
    <property type="entry name" value="Histone-fold"/>
</dbReference>
<dbReference type="InterPro" id="IPR002119">
    <property type="entry name" value="Histone_H2A"/>
</dbReference>
<dbReference type="InterPro" id="IPR007125">
    <property type="entry name" value="Histone_H2A/H2B/H3"/>
</dbReference>
<dbReference type="InterPro" id="IPR032454">
    <property type="entry name" value="Histone_H2A_C"/>
</dbReference>
<dbReference type="InterPro" id="IPR032458">
    <property type="entry name" value="Histone_H2A_CS"/>
</dbReference>
<dbReference type="PANTHER" id="PTHR23430">
    <property type="entry name" value="HISTONE H2A"/>
    <property type="match status" value="1"/>
</dbReference>
<dbReference type="Pfam" id="PF00125">
    <property type="entry name" value="Histone"/>
    <property type="match status" value="1"/>
</dbReference>
<dbReference type="Pfam" id="PF16211">
    <property type="entry name" value="Histone_H2A_C"/>
    <property type="match status" value="1"/>
</dbReference>
<dbReference type="PRINTS" id="PR00620">
    <property type="entry name" value="HISTONEH2A"/>
</dbReference>
<dbReference type="SMART" id="SM00414">
    <property type="entry name" value="H2A"/>
    <property type="match status" value="1"/>
</dbReference>
<dbReference type="SUPFAM" id="SSF47113">
    <property type="entry name" value="Histone-fold"/>
    <property type="match status" value="1"/>
</dbReference>
<dbReference type="PROSITE" id="PS00046">
    <property type="entry name" value="HISTONE_H2A"/>
    <property type="match status" value="1"/>
</dbReference>
<keyword id="KW-0002">3D-structure</keyword>
<keyword id="KW-0007">Acetylation</keyword>
<keyword id="KW-0158">Chromosome</keyword>
<keyword id="KW-0164">Citrullination</keyword>
<keyword id="KW-0238">DNA-binding</keyword>
<keyword id="KW-0379">Hydroxylation</keyword>
<keyword id="KW-1017">Isopeptide bond</keyword>
<keyword id="KW-0488">Methylation</keyword>
<keyword id="KW-0544">Nucleosome core</keyword>
<keyword id="KW-0539">Nucleus</keyword>
<keyword id="KW-0597">Phosphoprotein</keyword>
<keyword id="KW-1185">Reference proteome</keyword>
<keyword id="KW-0832">Ubl conjugation</keyword>
<sequence>MSGRGKQGGKARAKAKTRSSRAGLQFPVGRVHRLLRKGNYSERVGAGAPVYLAAVLEYLTAEILELAGNAARDNKKTRIIPRHLQLAIRNDEELNKLLGKVTIAQGGVLPNIQAVLLPKKTESHHKAKGK</sequence>
<name>H2A1D_HUMAN</name>
<organism>
    <name type="scientific">Homo sapiens</name>
    <name type="common">Human</name>
    <dbReference type="NCBI Taxonomy" id="9606"/>
    <lineage>
        <taxon>Eukaryota</taxon>
        <taxon>Metazoa</taxon>
        <taxon>Chordata</taxon>
        <taxon>Craniata</taxon>
        <taxon>Vertebrata</taxon>
        <taxon>Euteleostomi</taxon>
        <taxon>Mammalia</taxon>
        <taxon>Eutheria</taxon>
        <taxon>Euarchontoglires</taxon>
        <taxon>Primates</taxon>
        <taxon>Haplorrhini</taxon>
        <taxon>Catarrhini</taxon>
        <taxon>Hominidae</taxon>
        <taxon>Homo</taxon>
    </lineage>
</organism>
<comment type="function">
    <text>Core component of nucleosome. Nucleosomes wrap and compact DNA into chromatin, limiting DNA accessibility to the cellular machineries which require DNA as a template. Histones thereby play a central role in transcription regulation, DNA repair, DNA replication and chromosomal stability. DNA accessibility is regulated via a complex set of post-translational modifications of histones, also called histone code, and nucleosome remodeling.</text>
</comment>
<comment type="subunit">
    <text>The nucleosome is a histone octamer containing two molecules each of H2A, H2B, H3 and H4 assembled in one H3-H4 heterotetramer and two H2A-H2B heterodimers. The octamer wraps approximately 147 bp of DNA.</text>
</comment>
<comment type="subcellular location">
    <subcellularLocation>
        <location>Nucleus</location>
    </subcellularLocation>
    <subcellularLocation>
        <location>Chromosome</location>
    </subcellularLocation>
</comment>
<comment type="PTM">
    <text evidence="8">Deiminated on Arg-4 in granulocytes upon calcium entry.</text>
</comment>
<comment type="PTM">
    <text evidence="7 9 11 12 13 14 15 18 19 21 23 24">Monoubiquitination of Lys-120 (H2AK119Ub) by RING1, TRIM37 and RNF2/RING2 complex gives a specific tag for epigenetic transcriptional repression and participates in X chromosome inactivation of female mammals. It is involved in the initiation of both imprinted and random X inactivation. Ubiquitinated H2A is enriched in inactive X chromosome chromatin. Ubiquitination of H2A functions downstream of methylation of 'Lys-27' of histone H3 (H3K27me). H2AK119Ub by RNF2/RING2 can also be induced by ultraviolet and may be involved in DNA repair. Monoubiquitination of Lys-120 (H2AK119Ub) by TRIM37 may promote transformation of cells in a number of breast cancers (PubMed:25470042). Following DNA double-strand breaks (DSBs), it is ubiquitinated through 'Lys-63' linkage of ubiquitin moieties by the E2 ligase UBE2N and the E3 ligases RNF8 and RNF168, leading to the recruitment of repair proteins to sites of DNA damage. Ubiquitination at Lys-14 and Lys-16 (H2AK13Ub and H2AK15Ub, respectively) in response to DNA damage is initiated by RNF168 that mediates monoubiquitination at these 2 sites, and 'Lys-63'-linked ubiquitin are then conjugated to monoubiquitin; RNF8 is able to extend 'Lys-63'-linked ubiquitin chains in vitro. Deubiquitinated by USP51 at Lys-14 and Lys-16 (H2AK13Ub and H2AK15Ub, respectively) after damaged DNA is repaired (PubMed:27083998). H2AK119Ub and ionizing radiation-induced 'Lys-63'-linked ubiquitination (H2AK13Ub and H2AK15Ub) are distinct events.</text>
</comment>
<comment type="PTM">
    <text evidence="5 6 8 10 20">Phosphorylation on Ser-2 (H2AS1ph) is enhanced during mitosis. Phosphorylation on Ser-2 by RPS6KA5/MSK1 directly represses transcription. Acetylation of H3 inhibits Ser-2 phosphorylation by RPS6KA5/MSK1. Phosphorylation at Thr-121 (H2AT120ph) by DCAF1 is present in the regulatory region of many tumor suppresor genes and down-regulates their transcription.</text>
</comment>
<comment type="PTM">
    <text evidence="21">Glutamine methylation at Gln-105 (H2AQ104me) by FBL is specifically dedicated to polymerase I. It is present at 35S ribosomal DNA locus and impairs binding of the FACT complex (PubMed:24352239).</text>
</comment>
<comment type="PTM">
    <text evidence="3">Symmetric dimethylation on Arg-4 by the PRDM1/PRMT5 complex may play a crucial role in the germ-cell lineage.</text>
</comment>
<comment type="PTM">
    <text evidence="16">Crotonylation (Kcr) is specifically present in male germ cells and marks testis-specific genes in post-meiotic cells, including X-linked genes that escape sex chromosome inactivation in haploid cells. Crotonylation marks active promoters and enhancers and confers resistance to transcriptional repressors. It is also associated with post-meiotically activated genes on autosomes.</text>
</comment>
<comment type="PTM">
    <text evidence="2">Lactylated in macrophages by EP300/P300 by using lactoyl-CoA directly derived from endogenous or exogenous lactate, leading to stimulates gene transcription.</text>
</comment>
<comment type="mass spectrometry">
    <text>Monoisotopic with N-acetylserine.</text>
</comment>
<comment type="similarity">
    <text evidence="27">Belongs to the histone H2A family.</text>
</comment>
<comment type="caution">
    <text evidence="28">Was originally thought to originate from mouse.</text>
</comment>
<evidence type="ECO:0000250" key="1">
    <source>
        <dbReference type="UniProtKB" id="C0HKE3"/>
    </source>
</evidence>
<evidence type="ECO:0000250" key="2">
    <source>
        <dbReference type="UniProtKB" id="P0C0S5"/>
    </source>
</evidence>
<evidence type="ECO:0000250" key="3">
    <source>
        <dbReference type="UniProtKB" id="P22752"/>
    </source>
</evidence>
<evidence type="ECO:0000256" key="4">
    <source>
        <dbReference type="SAM" id="MobiDB-lite"/>
    </source>
</evidence>
<evidence type="ECO:0000269" key="5">
    <source>
    </source>
</evidence>
<evidence type="ECO:0000269" key="6">
    <source>
    </source>
</evidence>
<evidence type="ECO:0000269" key="7">
    <source>
    </source>
</evidence>
<evidence type="ECO:0000269" key="8">
    <source>
    </source>
</evidence>
<evidence type="ECO:0000269" key="9">
    <source>
    </source>
</evidence>
<evidence type="ECO:0000269" key="10">
    <source>
    </source>
</evidence>
<evidence type="ECO:0000269" key="11">
    <source>
    </source>
</evidence>
<evidence type="ECO:0000269" key="12">
    <source>
    </source>
</evidence>
<evidence type="ECO:0000269" key="13">
    <source>
    </source>
</evidence>
<evidence type="ECO:0000269" key="14">
    <source>
    </source>
</evidence>
<evidence type="ECO:0000269" key="15">
    <source>
    </source>
</evidence>
<evidence type="ECO:0000269" key="16">
    <source>
    </source>
</evidence>
<evidence type="ECO:0000269" key="17">
    <source>
    </source>
</evidence>
<evidence type="ECO:0000269" key="18">
    <source>
    </source>
</evidence>
<evidence type="ECO:0000269" key="19">
    <source>
    </source>
</evidence>
<evidence type="ECO:0000269" key="20">
    <source>
    </source>
</evidence>
<evidence type="ECO:0000269" key="21">
    <source>
    </source>
</evidence>
<evidence type="ECO:0000269" key="22">
    <source>
    </source>
</evidence>
<evidence type="ECO:0000269" key="23">
    <source>
    </source>
</evidence>
<evidence type="ECO:0000269" key="24">
    <source>
    </source>
</evidence>
<evidence type="ECO:0000269" key="25">
    <source>
    </source>
</evidence>
<evidence type="ECO:0000269" key="26">
    <source>
    </source>
</evidence>
<evidence type="ECO:0000305" key="27"/>
<evidence type="ECO:0000305" key="28">
    <source>
    </source>
</evidence>
<evidence type="ECO:0000312" key="29">
    <source>
        <dbReference type="HGNC" id="HGNC:4729"/>
    </source>
</evidence>
<evidence type="ECO:0007829" key="30">
    <source>
        <dbReference type="PDB" id="5GT3"/>
    </source>
</evidence>
<evidence type="ECO:0007829" key="31">
    <source>
        <dbReference type="PDB" id="6KBB"/>
    </source>
</evidence>
<evidence type="ECO:0007829" key="32">
    <source>
        <dbReference type="PDB" id="7WLP"/>
    </source>
</evidence>
<accession>P20671</accession>
<accession>A0PK91</accession>
<accession>P57754</accession>
<accession>Q6FGY6</accession>
<proteinExistence type="evidence at protein level"/>
<reference key="1">
    <citation type="journal article" date="1989" name="Nucleic Acids Res.">
        <title>Nucleotide sequences of mouse histone genes H2A and H3.1.</title>
        <authorList>
            <person name="Kosciessa U."/>
            <person name="Doenecke D."/>
        </authorList>
    </citation>
    <scope>NUCLEOTIDE SEQUENCE [GENOMIC DNA]</scope>
</reference>
<reference key="2">
    <citation type="journal article" date="1997" name="Genomics">
        <title>Human histone gene organization: nonregular arrangement within a large cluster.</title>
        <authorList>
            <person name="Albig W."/>
            <person name="Kioschis P."/>
            <person name="Poustka A."/>
            <person name="Meergans K."/>
            <person name="Doenecke D."/>
        </authorList>
    </citation>
    <scope>NUCLEOTIDE SEQUENCE [GENOMIC DNA]</scope>
</reference>
<reference key="3">
    <citation type="journal article" date="2002" name="Genomics">
        <title>The human and mouse replication-dependent histone genes.</title>
        <authorList>
            <person name="Marzluff W.F."/>
            <person name="Gongidi P."/>
            <person name="Woods K.R."/>
            <person name="Jin J."/>
            <person name="Maltais L.J."/>
        </authorList>
    </citation>
    <scope>NUCLEOTIDE SEQUENCE [GENOMIC DNA]</scope>
</reference>
<reference key="4">
    <citation type="submission" date="2004-06" db="EMBL/GenBank/DDBJ databases">
        <title>Cloning of human full open reading frames in Gateway(TM) system entry vector (pDONR201).</title>
        <authorList>
            <person name="Halleck A."/>
            <person name="Ebert L."/>
            <person name="Mkoundinya M."/>
            <person name="Schick M."/>
            <person name="Eisenstein S."/>
            <person name="Neubert P."/>
            <person name="Kstrang K."/>
            <person name="Schatten R."/>
            <person name="Shen B."/>
            <person name="Henze S."/>
            <person name="Mar W."/>
            <person name="Korn B."/>
            <person name="Zuo D."/>
            <person name="Hu Y."/>
            <person name="LaBaer J."/>
        </authorList>
    </citation>
    <scope>NUCLEOTIDE SEQUENCE [LARGE SCALE MRNA]</scope>
</reference>
<reference key="5">
    <citation type="journal article" date="2003" name="Nature">
        <title>The DNA sequence and analysis of human chromosome 6.</title>
        <authorList>
            <person name="Mungall A.J."/>
            <person name="Palmer S.A."/>
            <person name="Sims S.K."/>
            <person name="Edwards C.A."/>
            <person name="Ashurst J.L."/>
            <person name="Wilming L."/>
            <person name="Jones M.C."/>
            <person name="Horton R."/>
            <person name="Hunt S.E."/>
            <person name="Scott C.E."/>
            <person name="Gilbert J.G.R."/>
            <person name="Clamp M.E."/>
            <person name="Bethel G."/>
            <person name="Milne S."/>
            <person name="Ainscough R."/>
            <person name="Almeida J.P."/>
            <person name="Ambrose K.D."/>
            <person name="Andrews T.D."/>
            <person name="Ashwell R.I.S."/>
            <person name="Babbage A.K."/>
            <person name="Bagguley C.L."/>
            <person name="Bailey J."/>
            <person name="Banerjee R."/>
            <person name="Barker D.J."/>
            <person name="Barlow K.F."/>
            <person name="Bates K."/>
            <person name="Beare D.M."/>
            <person name="Beasley H."/>
            <person name="Beasley O."/>
            <person name="Bird C.P."/>
            <person name="Blakey S.E."/>
            <person name="Bray-Allen S."/>
            <person name="Brook J."/>
            <person name="Brown A.J."/>
            <person name="Brown J.Y."/>
            <person name="Burford D.C."/>
            <person name="Burrill W."/>
            <person name="Burton J."/>
            <person name="Carder C."/>
            <person name="Carter N.P."/>
            <person name="Chapman J.C."/>
            <person name="Clark S.Y."/>
            <person name="Clark G."/>
            <person name="Clee C.M."/>
            <person name="Clegg S."/>
            <person name="Cobley V."/>
            <person name="Collier R.E."/>
            <person name="Collins J.E."/>
            <person name="Colman L.K."/>
            <person name="Corby N.R."/>
            <person name="Coville G.J."/>
            <person name="Culley K.M."/>
            <person name="Dhami P."/>
            <person name="Davies J."/>
            <person name="Dunn M."/>
            <person name="Earthrowl M.E."/>
            <person name="Ellington A.E."/>
            <person name="Evans K.A."/>
            <person name="Faulkner L."/>
            <person name="Francis M.D."/>
            <person name="Frankish A."/>
            <person name="Frankland J."/>
            <person name="French L."/>
            <person name="Garner P."/>
            <person name="Garnett J."/>
            <person name="Ghori M.J."/>
            <person name="Gilby L.M."/>
            <person name="Gillson C.J."/>
            <person name="Glithero R.J."/>
            <person name="Grafham D.V."/>
            <person name="Grant M."/>
            <person name="Gribble S."/>
            <person name="Griffiths C."/>
            <person name="Griffiths M.N.D."/>
            <person name="Hall R."/>
            <person name="Halls K.S."/>
            <person name="Hammond S."/>
            <person name="Harley J.L."/>
            <person name="Hart E.A."/>
            <person name="Heath P.D."/>
            <person name="Heathcott R."/>
            <person name="Holmes S.J."/>
            <person name="Howden P.J."/>
            <person name="Howe K.L."/>
            <person name="Howell G.R."/>
            <person name="Huckle E."/>
            <person name="Humphray S.J."/>
            <person name="Humphries M.D."/>
            <person name="Hunt A.R."/>
            <person name="Johnson C.M."/>
            <person name="Joy A.A."/>
            <person name="Kay M."/>
            <person name="Keenan S.J."/>
            <person name="Kimberley A.M."/>
            <person name="King A."/>
            <person name="Laird G.K."/>
            <person name="Langford C."/>
            <person name="Lawlor S."/>
            <person name="Leongamornlert D.A."/>
            <person name="Leversha M."/>
            <person name="Lloyd C.R."/>
            <person name="Lloyd D.M."/>
            <person name="Loveland J.E."/>
            <person name="Lovell J."/>
            <person name="Martin S."/>
            <person name="Mashreghi-Mohammadi M."/>
            <person name="Maslen G.L."/>
            <person name="Matthews L."/>
            <person name="McCann O.T."/>
            <person name="McLaren S.J."/>
            <person name="McLay K."/>
            <person name="McMurray A."/>
            <person name="Moore M.J.F."/>
            <person name="Mullikin J.C."/>
            <person name="Niblett D."/>
            <person name="Nickerson T."/>
            <person name="Novik K.L."/>
            <person name="Oliver K."/>
            <person name="Overton-Larty E.K."/>
            <person name="Parker A."/>
            <person name="Patel R."/>
            <person name="Pearce A.V."/>
            <person name="Peck A.I."/>
            <person name="Phillimore B.J.C.T."/>
            <person name="Phillips S."/>
            <person name="Plumb R.W."/>
            <person name="Porter K.M."/>
            <person name="Ramsey Y."/>
            <person name="Ranby S.A."/>
            <person name="Rice C.M."/>
            <person name="Ross M.T."/>
            <person name="Searle S.M."/>
            <person name="Sehra H.K."/>
            <person name="Sheridan E."/>
            <person name="Skuce C.D."/>
            <person name="Smith S."/>
            <person name="Smith M."/>
            <person name="Spraggon L."/>
            <person name="Squares S.L."/>
            <person name="Steward C.A."/>
            <person name="Sycamore N."/>
            <person name="Tamlyn-Hall G."/>
            <person name="Tester J."/>
            <person name="Theaker A.J."/>
            <person name="Thomas D.W."/>
            <person name="Thorpe A."/>
            <person name="Tracey A."/>
            <person name="Tromans A."/>
            <person name="Tubby B."/>
            <person name="Wall M."/>
            <person name="Wallis J.M."/>
            <person name="West A.P."/>
            <person name="White S.S."/>
            <person name="Whitehead S.L."/>
            <person name="Whittaker H."/>
            <person name="Wild A."/>
            <person name="Willey D.J."/>
            <person name="Wilmer T.E."/>
            <person name="Wood J.M."/>
            <person name="Wray P.W."/>
            <person name="Wyatt J.C."/>
            <person name="Young L."/>
            <person name="Younger R.M."/>
            <person name="Bentley D.R."/>
            <person name="Coulson A."/>
            <person name="Durbin R.M."/>
            <person name="Hubbard T."/>
            <person name="Sulston J.E."/>
            <person name="Dunham I."/>
            <person name="Rogers J."/>
            <person name="Beck S."/>
        </authorList>
    </citation>
    <scope>NUCLEOTIDE SEQUENCE [LARGE SCALE GENOMIC DNA]</scope>
</reference>
<reference key="6">
    <citation type="journal article" date="2004" name="Genome Res.">
        <title>The status, quality, and expansion of the NIH full-length cDNA project: the Mammalian Gene Collection (MGC).</title>
        <authorList>
            <consortium name="The MGC Project Team"/>
        </authorList>
    </citation>
    <scope>NUCLEOTIDE SEQUENCE [LARGE SCALE MRNA]</scope>
    <source>
        <tissue>Lung</tissue>
    </source>
</reference>
<reference key="7">
    <citation type="journal article" date="2004" name="Genes Dev.">
        <title>Nucleosomal histone kinase-1 phosphorylates H2A Thr 119 during mitosis in the early Drosophila embryo.</title>
        <authorList>
            <person name="Aihara H."/>
            <person name="Nakagawa T."/>
            <person name="Yasui K."/>
            <person name="Ohta T."/>
            <person name="Hirose S."/>
            <person name="Dhomae N."/>
            <person name="Takio K."/>
            <person name="Kaneko M."/>
            <person name="Takeshima Y."/>
            <person name="Muramatsu M."/>
            <person name="Ito T."/>
        </authorList>
    </citation>
    <scope>PHOSPHORYLATION AT THR-121</scope>
</reference>
<reference key="8">
    <citation type="journal article" date="2004" name="J. Biol. Chem.">
        <title>Phosphorylation of histone H2A inhibits transcription on chromatin templates.</title>
        <authorList>
            <person name="Zhang Y."/>
            <person name="Griffin K."/>
            <person name="Mondal N."/>
            <person name="Parvin J.D."/>
        </authorList>
    </citation>
    <scope>PHOSPHORYLATION AT SER-2</scope>
    <scope>MUTAGENESIS OF SER-2</scope>
</reference>
<reference key="9">
    <citation type="journal article" date="2004" name="Nature">
        <title>Role of histone H2A ubiquitination in Polycomb silencing.</title>
        <authorList>
            <person name="Wang H."/>
            <person name="Wang L."/>
            <person name="Erdjument-Bromage H."/>
            <person name="Vidal M."/>
            <person name="Tempst P."/>
            <person name="Jones R.S."/>
            <person name="Zhang Y."/>
        </authorList>
    </citation>
    <scope>UBIQUITINATION AT LYS-120</scope>
</reference>
<reference key="10">
    <citation type="journal article" date="2005" name="Biochemistry">
        <title>Deimination of histone H2A and H4 at arginine 3 in HL-60 granulocytes.</title>
        <authorList>
            <person name="Hagiwara T."/>
            <person name="Hidaka Y."/>
            <person name="Yamada M."/>
        </authorList>
    </citation>
    <scope>ACETYLATION AT SER-2</scope>
    <scope>CITRULLINATION AT ARG-4</scope>
    <scope>IDENTIFICATION BY MASS SPECTROMETRY</scope>
</reference>
<reference key="11">
    <citation type="journal article" date="2005" name="Mol. Cell">
        <title>Role of Bmi-1 and Ring1A in H2A ubiquitylation and Hox gene silencing.</title>
        <authorList>
            <person name="Cao R."/>
            <person name="Tsukada Y."/>
            <person name="Zhang Y."/>
        </authorList>
    </citation>
    <scope>UBIQUITINATION AT LYS-120</scope>
</reference>
<reference key="12">
    <citation type="journal article" date="2006" name="Genes Dev.">
        <title>DNA damage triggers nucleotide excision repair-dependent monoubiquitylation of histone H2A.</title>
        <authorList>
            <person name="Bergink S."/>
            <person name="Salomons F.A."/>
            <person name="Hoogstraten D."/>
            <person name="Groothuis T.A.M."/>
            <person name="de Waard H."/>
            <person name="Wu J."/>
            <person name="Yuan L."/>
            <person name="Citterio E."/>
            <person name="Houtsmuller A.B."/>
            <person name="Neefjes J."/>
            <person name="Hoeijmakers J.H.J."/>
            <person name="Vermeulen W."/>
            <person name="Dantuma N.P."/>
        </authorList>
    </citation>
    <scope>UBIQUITINATION AT LYS-120</scope>
</reference>
<reference key="13">
    <citation type="journal article" date="2006" name="J. Proteome Res.">
        <title>Precise characterization of human histones in the H2A gene family by top down mass spectrometry.</title>
        <authorList>
            <person name="Boyne M.T. II"/>
            <person name="Pesavento J.J."/>
            <person name="Mizzen C.A."/>
            <person name="Kelleher N.L."/>
        </authorList>
    </citation>
    <scope>MASS SPECTROMETRY</scope>
    <scope>ACETYLATION AT SER-2</scope>
</reference>
<reference key="14">
    <citation type="journal article" date="2007" name="Cell">
        <title>RNF8 ubiquitylates histones at DNA double-strand breaks and promotes assembly of repair proteins.</title>
        <authorList>
            <person name="Mailand N."/>
            <person name="Bekker-Jensen S."/>
            <person name="Faustrup H."/>
            <person name="Melander F."/>
            <person name="Bartek J."/>
            <person name="Lukas C."/>
            <person name="Lukas J."/>
        </authorList>
    </citation>
    <scope>UBIQUITINATION</scope>
</reference>
<reference key="15">
    <citation type="journal article" date="2007" name="Cell">
        <title>RNF8 transduces the DNA-damage signal via histone ubiquitylation and checkpoint protein assembly.</title>
        <authorList>
            <person name="Huen M.S.Y."/>
            <person name="Grant R."/>
            <person name="Manke I."/>
            <person name="Minn K."/>
            <person name="Yu X."/>
            <person name="Yaffe M.B."/>
            <person name="Chen J."/>
        </authorList>
    </citation>
    <scope>UBIQUITINATION</scope>
</reference>
<reference key="16">
    <citation type="journal article" date="2009" name="Cell">
        <title>The RIDDLE syndrome protein mediates a ubiquitin-dependent signaling cascade at sites of DNA damage.</title>
        <authorList>
            <person name="Stewart G.S."/>
            <person name="Panier S."/>
            <person name="Townsend K."/>
            <person name="Al-Hakim A.K."/>
            <person name="Kolas N.K."/>
            <person name="Miller E.S."/>
            <person name="Nakada S."/>
            <person name="Ylanko J."/>
            <person name="Olivarius S."/>
            <person name="Mendez M."/>
            <person name="Oldreive C."/>
            <person name="Wildenhain J."/>
            <person name="Tagliaferro A."/>
            <person name="Pelletier L."/>
            <person name="Taubenheim N."/>
            <person name="Durandy A."/>
            <person name="Byrd P.J."/>
            <person name="Stankovic T."/>
            <person name="Taylor A.M.R."/>
            <person name="Durocher D."/>
        </authorList>
    </citation>
    <scope>UBIQUITINATION</scope>
</reference>
<reference key="17">
    <citation type="journal article" date="2009" name="Cell">
        <title>RNF168 binds and amplifies ubiquitin conjugates on damaged chromosomes to allow accumulation of repair proteins.</title>
        <authorList>
            <person name="Doil C."/>
            <person name="Mailand N."/>
            <person name="Bekker-Jensen S."/>
            <person name="Menard P."/>
            <person name="Larsen D.H."/>
            <person name="Pepperkok R."/>
            <person name="Ellenberg J."/>
            <person name="Panier S."/>
            <person name="Durocher D."/>
            <person name="Bartek J."/>
            <person name="Lukas J."/>
            <person name="Lukas C."/>
        </authorList>
    </citation>
    <scope>UBIQUITINATION</scope>
</reference>
<reference key="18">
    <citation type="journal article" date="2011" name="Cell">
        <title>Identification of 67 histone marks and histone lysine crotonylation as a new type of histone modification.</title>
        <authorList>
            <person name="Tan M."/>
            <person name="Luo H."/>
            <person name="Lee S."/>
            <person name="Jin F."/>
            <person name="Yang J.S."/>
            <person name="Montellier E."/>
            <person name="Buchou T."/>
            <person name="Cheng Z."/>
            <person name="Rousseaux S."/>
            <person name="Rajagopal N."/>
            <person name="Lu Z."/>
            <person name="Ye Z."/>
            <person name="Zhu Q."/>
            <person name="Wysocka J."/>
            <person name="Ye Y."/>
            <person name="Khochbin S."/>
            <person name="Ren B."/>
            <person name="Zhao Y."/>
        </authorList>
    </citation>
    <scope>CROTONYLATION AT LYS-37; LYS-119; LYS-120 AND LYS-126</scope>
</reference>
<reference key="19">
    <citation type="journal article" date="2012" name="Cell">
        <title>RNF168 ubiquitinates K13-15 on H2A/H2AX to drive DNA Damage signaling.</title>
        <authorList>
            <person name="Mattiroli F."/>
            <person name="Vissers J.H."/>
            <person name="van Dijk W.J."/>
            <person name="Ikpa P."/>
            <person name="Citterio E."/>
            <person name="Vermeulen W."/>
            <person name="Marteijn J.A."/>
            <person name="Sixma T.K."/>
        </authorList>
    </citation>
    <scope>UBIQUITINATION AT LYS-14 AND LYS-16 BY RNF168</scope>
</reference>
<reference key="20">
    <citation type="journal article" date="2012" name="Cell Cycle">
        <title>A novel ubiquitin mark at the N-terminal tail of histone H2As targeted by RNF168 ubiquitin ligase.</title>
        <authorList>
            <person name="Gatti M."/>
            <person name="Pinato S."/>
            <person name="Maspero E."/>
            <person name="Soffientini P."/>
            <person name="Polo S."/>
            <person name="Penengo L."/>
        </authorList>
    </citation>
    <scope>UBIQUITINATION AT LYS-14 AND LYS-16 BY RNF168</scope>
</reference>
<reference key="21">
    <citation type="journal article" date="2012" name="Mol. Cell. Proteomics">
        <title>Lysine succinylation and lysine malonylation in histones.</title>
        <authorList>
            <person name="Xie Z."/>
            <person name="Dai J."/>
            <person name="Dai L."/>
            <person name="Tan M."/>
            <person name="Cheng Z."/>
            <person name="Wu Y."/>
            <person name="Boeke J.D."/>
            <person name="Zhao Y."/>
        </authorList>
    </citation>
    <scope>SUCCINYLATION AT LYS-10 AND LYS-96</scope>
</reference>
<reference key="22">
    <citation type="journal article" date="2013" name="Mol. Cell">
        <title>VprBP has intrinsic kinase activity targeting histone H2A and represses gene transcription.</title>
        <authorList>
            <person name="Kim K."/>
            <person name="Kim J.M."/>
            <person name="Kim J.S."/>
            <person name="Choi J."/>
            <person name="Lee Y.S."/>
            <person name="Neamati N."/>
            <person name="Song J.S."/>
            <person name="Heo K."/>
            <person name="An W."/>
        </authorList>
    </citation>
    <scope>PHOSPHORYLATION AT THR-121</scope>
</reference>
<reference key="23">
    <citation type="journal article" date="2014" name="Nat. Chem. Biol.">
        <title>Lysine 2-hydroxyisobutyrylation is a widely distributed active histone mark.</title>
        <authorList>
            <person name="Dai L."/>
            <person name="Peng C."/>
            <person name="Montellier E."/>
            <person name="Lu Z."/>
            <person name="Chen Y."/>
            <person name="Ishii H."/>
            <person name="Debernardi A."/>
            <person name="Buchou T."/>
            <person name="Rousseaux S."/>
            <person name="Jin F."/>
            <person name="Sabari B.R."/>
            <person name="Deng Z."/>
            <person name="Allis C.D."/>
            <person name="Ren B."/>
            <person name="Khochbin S."/>
            <person name="Zhao Y."/>
        </authorList>
    </citation>
    <scope>HYDROXYBUTYRYLATION AT LYS-6; LYS-10; LYS-37; LYS-75; LYS-76; LYS-96 AND LYS-119</scope>
</reference>
<reference key="24">
    <citation type="journal article" date="2014" name="Nature">
        <title>Glutamine methylation in histone H2A is an RNA-polymerase-I-dedicated modification.</title>
        <authorList>
            <person name="Tessarz P."/>
            <person name="Santos-Rosa H."/>
            <person name="Robson S.C."/>
            <person name="Sylvestersen K.B."/>
            <person name="Nelson C.J."/>
            <person name="Nielsen M.L."/>
            <person name="Kouzarides T."/>
        </authorList>
    </citation>
    <scope>METHYLATION AT GLN-105</scope>
</reference>
<reference key="25">
    <citation type="journal article" date="2014" name="Nature">
        <title>TRIM37 is a new histone H2A ubiquitin ligase and breast cancer oncoprotein.</title>
        <authorList>
            <person name="Bhatnagar S."/>
            <person name="Gazin C."/>
            <person name="Chamberlain L."/>
            <person name="Ou J."/>
            <person name="Zhu X."/>
            <person name="Tushir J.S."/>
            <person name="Virbasius C.M."/>
            <person name="Lin L."/>
            <person name="Zhu L.J."/>
            <person name="Wajapeyee N."/>
            <person name="Green M.R."/>
        </authorList>
    </citation>
    <scope>UBIQUITINATION AT LYS-120</scope>
</reference>
<reference key="26">
    <citation type="journal article" date="2016" name="Genes Dev.">
        <title>USP51 deubiquitylates H2AK13,15ub and regulates DNA damage response.</title>
        <authorList>
            <person name="Wang Z."/>
            <person name="Zhang H."/>
            <person name="Liu J."/>
            <person name="Cheruiyot A."/>
            <person name="Lee J.H."/>
            <person name="Ordog T."/>
            <person name="Lou Z."/>
            <person name="You Z."/>
            <person name="Zhang Z."/>
        </authorList>
    </citation>
    <scope>DEUBIQUITINATION AT LYS-14 AND LYS-16 BY USP51</scope>
</reference>
<reference key="27">
    <citation type="journal article" date="2016" name="Mol. Cell">
        <title>Metabolic regulation of gene expression by histone lysine beta-hydroxybutyrylation.</title>
        <authorList>
            <person name="Xie Z."/>
            <person name="Zhang D."/>
            <person name="Chung D."/>
            <person name="Tang Z."/>
            <person name="Huang H."/>
            <person name="Dai L."/>
            <person name="Qi S."/>
            <person name="Li J."/>
            <person name="Colak G."/>
            <person name="Chen Y."/>
            <person name="Xia C."/>
            <person name="Peng C."/>
            <person name="Ruan H."/>
            <person name="Kirkey M."/>
            <person name="Wang D."/>
            <person name="Jensen L.M."/>
            <person name="Kwon O.K."/>
            <person name="Lee S."/>
            <person name="Pletcher S.D."/>
            <person name="Tan M."/>
            <person name="Lombard D.B."/>
            <person name="White K.P."/>
            <person name="Zhao H."/>
            <person name="Li J."/>
            <person name="Roeder R.G."/>
            <person name="Yang X."/>
            <person name="Zhao Y."/>
        </authorList>
    </citation>
    <scope>HYDROXYBUTYRYLATION AT LYS-10; LYS-14; LYS-37; LYS-96 AND LYS-119</scope>
</reference>
<reference key="28">
    <citation type="journal article" date="2019" name="Mol. Cell">
        <title>Glutarylation of histone H4 lysine 91 regulates chromatin dynamics.</title>
        <authorList>
            <person name="Bao X."/>
            <person name="Liu Z."/>
            <person name="Zhang W."/>
            <person name="Gladysz K."/>
            <person name="Fung Y.M.E."/>
            <person name="Tian G."/>
            <person name="Xiong Y."/>
            <person name="Wong J.W.H."/>
            <person name="Yuen K.W.Y."/>
            <person name="Li X.D."/>
        </authorList>
    </citation>
    <scope>GLUTARYLATION AT LYS-96; LYS-100; LYS-119; LYS-120 AND LYS-126</scope>
</reference>
<protein>
    <recommendedName>
        <fullName>Histone H2A type 1-D</fullName>
    </recommendedName>
    <alternativeName>
        <fullName>Histone H2A.3</fullName>
    </alternativeName>
    <alternativeName>
        <fullName>Histone H2A/g</fullName>
    </alternativeName>
</protein>
<feature type="initiator methionine" description="Removed" evidence="8 10">
    <location>
        <position position="1"/>
    </location>
</feature>
<feature type="chain" id="PRO_0000055234" description="Histone H2A type 1-D">
    <location>
        <begin position="2"/>
        <end position="130"/>
    </location>
</feature>
<feature type="region of interest" description="Disordered" evidence="4">
    <location>
        <begin position="1"/>
        <end position="22"/>
    </location>
</feature>
<feature type="compositionally biased region" description="Basic residues" evidence="4">
    <location>
        <begin position="7"/>
        <end position="19"/>
    </location>
</feature>
<feature type="modified residue" description="N-acetylserine" evidence="8 10">
    <location>
        <position position="2"/>
    </location>
</feature>
<feature type="modified residue" description="Phosphoserine; by RPS6KA5" evidence="1">
    <location>
        <position position="2"/>
    </location>
</feature>
<feature type="modified residue" description="Citrulline; alternate" evidence="8">
    <location>
        <position position="4"/>
    </location>
</feature>
<feature type="modified residue" description="Symmetric dimethylarginine; by PRMT5; alternate" evidence="1">
    <location>
        <position position="4"/>
    </location>
</feature>
<feature type="modified residue" description="N6-(2-hydroxyisobutyryl)lysine; alternate" evidence="22">
    <location>
        <position position="6"/>
    </location>
</feature>
<feature type="modified residue" description="N6-acetyllysine; alternate" evidence="1">
    <location>
        <position position="6"/>
    </location>
</feature>
<feature type="modified residue" description="N6-(2-hydroxyisobutyryl)lysine; alternate" evidence="22">
    <location>
        <position position="10"/>
    </location>
</feature>
<feature type="modified residue" description="N6-(beta-hydroxybutyryl)lysine; alternate" evidence="25">
    <location>
        <position position="10"/>
    </location>
</feature>
<feature type="modified residue" description="N6-lactoyllysine; alternate" evidence="2">
    <location>
        <position position="10"/>
    </location>
</feature>
<feature type="modified residue" description="N6-succinyllysine; alternate" evidence="17">
    <location>
        <position position="10"/>
    </location>
</feature>
<feature type="modified residue" description="N6-(beta-hydroxybutyryl)lysine; alternate" evidence="25">
    <location>
        <position position="14"/>
    </location>
</feature>
<feature type="modified residue" description="N6-(2-hydroxyisobutyryl)lysine; alternate" evidence="22">
    <location>
        <position position="37"/>
    </location>
</feature>
<feature type="modified residue" description="N6-(beta-hydroxybutyryl)lysine; alternate" evidence="25">
    <location>
        <position position="37"/>
    </location>
</feature>
<feature type="modified residue" description="N6-crotonyllysine; alternate" evidence="16">
    <location>
        <position position="37"/>
    </location>
</feature>
<feature type="modified residue" description="N6-(2-hydroxyisobutyryl)lysine" evidence="22">
    <location>
        <position position="75"/>
    </location>
</feature>
<feature type="modified residue" description="N6-(2-hydroxyisobutyryl)lysine" evidence="22">
    <location>
        <position position="76"/>
    </location>
</feature>
<feature type="modified residue" description="N6-(2-hydroxyisobutyryl)lysine; alternate" evidence="22">
    <location>
        <position position="96"/>
    </location>
</feature>
<feature type="modified residue" description="N6-(beta-hydroxybutyryl)lysine; alternate" evidence="25">
    <location>
        <position position="96"/>
    </location>
</feature>
<feature type="modified residue" description="N6-glutaryllysine; alternate" evidence="26">
    <location>
        <position position="96"/>
    </location>
</feature>
<feature type="modified residue" description="N6-succinyllysine; alternate" evidence="17">
    <location>
        <position position="96"/>
    </location>
</feature>
<feature type="modified residue" description="N6-glutaryllysine" evidence="26">
    <location>
        <position position="100"/>
    </location>
</feature>
<feature type="modified residue" description="N5-methylglutamine" evidence="21">
    <location>
        <position position="105"/>
    </location>
</feature>
<feature type="modified residue" description="N6-(2-hydroxyisobutyryl)lysine; alternate" evidence="22">
    <location>
        <position position="119"/>
    </location>
</feature>
<feature type="modified residue" description="N6-(beta-hydroxybutyryl)lysine; alternate" evidence="25">
    <location>
        <position position="119"/>
    </location>
</feature>
<feature type="modified residue" description="N6-crotonyllysine; alternate" evidence="16">
    <location>
        <position position="119"/>
    </location>
</feature>
<feature type="modified residue" description="N6-glutaryllysine; alternate" evidence="26">
    <location>
        <position position="119"/>
    </location>
</feature>
<feature type="modified residue" description="N6-crotonyllysine; alternate" evidence="16">
    <location>
        <position position="120"/>
    </location>
</feature>
<feature type="modified residue" description="N6-glutaryllysine; alternate" evidence="26">
    <location>
        <position position="120"/>
    </location>
</feature>
<feature type="modified residue" description="Phosphothreonine; by DCAF1" evidence="6 20">
    <location>
        <position position="121"/>
    </location>
</feature>
<feature type="modified residue" description="N6-crotonyllysine; alternate" evidence="16">
    <location>
        <position position="126"/>
    </location>
</feature>
<feature type="modified residue" description="N6-glutaryllysine; alternate" evidence="26">
    <location>
        <position position="126"/>
    </location>
</feature>
<feature type="cross-link" description="Glycyl lysine isopeptide (Lys-Gly) (interchain with G-Cter in ubiquitin); alternate" evidence="18 19">
    <location>
        <position position="14"/>
    </location>
</feature>
<feature type="cross-link" description="Glycyl lysine isopeptide (Lys-Gly) (interchain with G-Cter in ubiquitin)" evidence="18 19">
    <location>
        <position position="16"/>
    </location>
</feature>
<feature type="cross-link" description="Glycyl lysine isopeptide (Lys-Gly) (interchain with G-Cter in ubiquitin); alternate" evidence="7 9 11 23">
    <location>
        <position position="120"/>
    </location>
</feature>
<feature type="mutagenesis site" description="Blocks the inhibition of transcription by RPS6KA5/MSK1." evidence="5">
    <original>S</original>
    <variation>A</variation>
    <location>
        <position position="2"/>
    </location>
</feature>
<feature type="helix" evidence="32">
    <location>
        <begin position="18"/>
        <end position="22"/>
    </location>
</feature>
<feature type="helix" evidence="32">
    <location>
        <begin position="28"/>
        <end position="36"/>
    </location>
</feature>
<feature type="turn" evidence="30">
    <location>
        <begin position="37"/>
        <end position="39"/>
    </location>
</feature>
<feature type="strand" evidence="31">
    <location>
        <begin position="42"/>
        <end position="44"/>
    </location>
</feature>
<feature type="helix" evidence="32">
    <location>
        <begin position="47"/>
        <end position="73"/>
    </location>
</feature>
<feature type="strand" evidence="32">
    <location>
        <begin position="77"/>
        <end position="79"/>
    </location>
</feature>
<feature type="helix" evidence="32">
    <location>
        <begin position="81"/>
        <end position="90"/>
    </location>
</feature>
<feature type="helix" evidence="32">
    <location>
        <begin position="92"/>
        <end position="101"/>
    </location>
</feature>
<feature type="helix" evidence="30">
    <location>
        <begin position="114"/>
        <end position="116"/>
    </location>
</feature>
<gene>
    <name evidence="29" type="primary">H2AC7</name>
    <name evidence="29" type="synonym">H2AFG</name>
    <name evidence="29" type="synonym">HIST1H2AD</name>
</gene>